<protein>
    <recommendedName>
        <fullName>NACHT, LRR and PYD domains-containing protein 11</fullName>
    </recommendedName>
    <alternativeName>
        <fullName>Nucleotide-binding oligomerization domain protein 17</fullName>
    </alternativeName>
    <alternativeName>
        <fullName>PAAD-and NACHT domain-containing protein 10</fullName>
    </alternativeName>
    <alternativeName>
        <fullName>PYRIN-containing APAF1-like protein 6</fullName>
    </alternativeName>
</protein>
<comment type="function">
    <text evidence="11">Involved in inflammation.</text>
</comment>
<comment type="alternative products">
    <event type="alternative splicing"/>
    <isoform>
        <id>P59045-1</id>
        <name>1</name>
        <sequence type="displayed"/>
    </isoform>
    <isoform>
        <id>P59045-2</id>
        <name>2</name>
        <sequence type="described" ref="VSP_007068"/>
    </isoform>
    <isoform>
        <id>P59045-3</id>
        <name>3</name>
        <sequence type="described" ref="VSP_038210"/>
    </isoform>
</comment>
<comment type="similarity">
    <text evidence="11">Belongs to the NLRP family.</text>
</comment>
<comment type="sequence caution" evidence="11">
    <conflict type="erroneous initiation">
        <sequence resource="EMBL-CDS" id="BAC03490"/>
    </conflict>
</comment>
<feature type="chain" id="PRO_0000080898" description="NACHT, LRR and PYD domains-containing protein 11">
    <location>
        <begin position="1"/>
        <end position="1033"/>
    </location>
</feature>
<feature type="domain" description="Pyrin" evidence="1">
    <location>
        <begin position="1"/>
        <end position="91"/>
    </location>
</feature>
<feature type="domain" description="NACHT" evidence="2">
    <location>
        <begin position="147"/>
        <end position="470"/>
    </location>
</feature>
<feature type="repeat" description="LRR 1">
    <location>
        <begin position="588"/>
        <end position="611"/>
    </location>
</feature>
<feature type="repeat" description="LRR 2">
    <location>
        <begin position="632"/>
        <end position="655"/>
    </location>
</feature>
<feature type="repeat" description="LRR 3">
    <location>
        <begin position="745"/>
        <end position="768"/>
    </location>
</feature>
<feature type="repeat" description="LRR 4">
    <location>
        <begin position="802"/>
        <end position="827"/>
    </location>
</feature>
<feature type="repeat" description="LRR 5">
    <location>
        <begin position="859"/>
        <end position="882"/>
    </location>
</feature>
<feature type="repeat" description="LRR 6">
    <location>
        <begin position="919"/>
        <end position="944"/>
    </location>
</feature>
<feature type="binding site" evidence="2">
    <location>
        <begin position="153"/>
        <end position="160"/>
    </location>
    <ligand>
        <name>ATP</name>
        <dbReference type="ChEBI" id="CHEBI:30616"/>
    </ligand>
</feature>
<feature type="splice variant" id="VSP_038210" description="In isoform 3." evidence="10">
    <location>
        <begin position="1"/>
        <end position="99"/>
    </location>
</feature>
<feature type="splice variant" id="VSP_007068" description="In isoform 2." evidence="9">
    <original>SQMKSLVYWREICSLFYTMESLRELHIFDNDLNGISERILSKALEHSSCKLRTLK</original>
    <variation>R</variation>
    <location>
        <begin position="614"/>
        <end position="668"/>
    </location>
</feature>
<feature type="sequence variant" id="VAR_060212" description="In dbSNP:rs299163." evidence="3 4 5 6 7 8">
    <original>A</original>
    <variation>S</variation>
    <location>
        <position position="188"/>
    </location>
</feature>
<feature type="sequence variant" id="VAR_062141" description="In dbSNP:rs59244027.">
    <original>N</original>
    <variation>D</variation>
    <location>
        <position position="233"/>
    </location>
</feature>
<feature type="sequence variant" id="VAR_057710" description="In dbSNP:rs12461110.">
    <original>P</original>
    <variation>L</variation>
    <location>
        <position position="438"/>
    </location>
</feature>
<feature type="sequence conflict" description="In Ref. 8; BAC03490." evidence="11" ref="8">
    <original>T</original>
    <variation>I</variation>
    <location>
        <position position="788"/>
    </location>
</feature>
<reference key="1">
    <citation type="journal article" date="2002" name="J. Biol. Chem.">
        <title>PYPAF7, a novel PYRIN-containing Apaf1-like protein that regulates activation of NF-kappa B and caspase-1-dependent cytokine processing.</title>
        <authorList>
            <person name="Wang L."/>
            <person name="Manji G.A."/>
            <person name="Grenier J.M."/>
            <person name="Al-Garawi A."/>
            <person name="Merriam S."/>
            <person name="Lora J.M."/>
            <person name="Geddes B.J."/>
            <person name="Briskin M."/>
            <person name="DiStefano P.S."/>
            <person name="Bertin J."/>
        </authorList>
    </citation>
    <scope>NUCLEOTIDE SEQUENCE [MRNA] (ISOFORM 1)</scope>
    <scope>VARIANT SER-188</scope>
</reference>
<reference key="2">
    <citation type="journal article" date="2003" name="Biochem. Biophys. Res. Commun.">
        <title>Regulation of cryopyrin/Pypaf1 signaling by pyrin, the familial Mediterranean fever gene product.</title>
        <authorList>
            <person name="Dowds T.A."/>
            <person name="Masumoto J."/>
            <person name="Chen F.F."/>
            <person name="Ogura Y."/>
            <person name="Inohara N."/>
            <person name="Nunez G."/>
        </authorList>
    </citation>
    <scope>NUCLEOTIDE SEQUENCE [MRNA] (ISOFORM 1)</scope>
    <scope>VARIANT SER-188</scope>
</reference>
<reference key="3">
    <citation type="journal article" date="2003" name="Nat. Rev. Mol. Cell Biol.">
        <title>NALPs: a novel protein family involved in inflammation.</title>
        <authorList>
            <person name="Tschopp J."/>
            <person name="Martinon F."/>
            <person name="Burns K."/>
        </authorList>
    </citation>
    <scope>NUCLEOTIDE SEQUENCE [MRNA] (ISOFORM 1)</scope>
    <scope>VARIANT SER-188</scope>
</reference>
<reference key="4">
    <citation type="submission" date="2002-10" db="EMBL/GenBank/DDBJ databases">
        <title>PAN10: a novel PAAD-containing protein.</title>
        <authorList>
            <person name="Stehlik C."/>
            <person name="Xu F."/>
            <person name="Stassinopoulos A."/>
            <person name="Godzik A."/>
            <person name="Reed J.C."/>
        </authorList>
    </citation>
    <scope>NUCLEOTIDE SEQUENCE [MRNA] (ISOFORMS 1 AND 3)</scope>
    <scope>VARIANT SER-188</scope>
</reference>
<reference key="5">
    <citation type="journal article" date="2004" name="Nature">
        <title>The DNA sequence and biology of human chromosome 19.</title>
        <authorList>
            <person name="Grimwood J."/>
            <person name="Gordon L.A."/>
            <person name="Olsen A.S."/>
            <person name="Terry A."/>
            <person name="Schmutz J."/>
            <person name="Lamerdin J.E."/>
            <person name="Hellsten U."/>
            <person name="Goodstein D."/>
            <person name="Couronne O."/>
            <person name="Tran-Gyamfi M."/>
            <person name="Aerts A."/>
            <person name="Altherr M."/>
            <person name="Ashworth L."/>
            <person name="Bajorek E."/>
            <person name="Black S."/>
            <person name="Branscomb E."/>
            <person name="Caenepeel S."/>
            <person name="Carrano A.V."/>
            <person name="Caoile C."/>
            <person name="Chan Y.M."/>
            <person name="Christensen M."/>
            <person name="Cleland C.A."/>
            <person name="Copeland A."/>
            <person name="Dalin E."/>
            <person name="Dehal P."/>
            <person name="Denys M."/>
            <person name="Detter J.C."/>
            <person name="Escobar J."/>
            <person name="Flowers D."/>
            <person name="Fotopulos D."/>
            <person name="Garcia C."/>
            <person name="Georgescu A.M."/>
            <person name="Glavina T."/>
            <person name="Gomez M."/>
            <person name="Gonzales E."/>
            <person name="Groza M."/>
            <person name="Hammon N."/>
            <person name="Hawkins T."/>
            <person name="Haydu L."/>
            <person name="Ho I."/>
            <person name="Huang W."/>
            <person name="Israni S."/>
            <person name="Jett J."/>
            <person name="Kadner K."/>
            <person name="Kimball H."/>
            <person name="Kobayashi A."/>
            <person name="Larionov V."/>
            <person name="Leem S.-H."/>
            <person name="Lopez F."/>
            <person name="Lou Y."/>
            <person name="Lowry S."/>
            <person name="Malfatti S."/>
            <person name="Martinez D."/>
            <person name="McCready P.M."/>
            <person name="Medina C."/>
            <person name="Morgan J."/>
            <person name="Nelson K."/>
            <person name="Nolan M."/>
            <person name="Ovcharenko I."/>
            <person name="Pitluck S."/>
            <person name="Pollard M."/>
            <person name="Popkie A.P."/>
            <person name="Predki P."/>
            <person name="Quan G."/>
            <person name="Ramirez L."/>
            <person name="Rash S."/>
            <person name="Retterer J."/>
            <person name="Rodriguez A."/>
            <person name="Rogers S."/>
            <person name="Salamov A."/>
            <person name="Salazar A."/>
            <person name="She X."/>
            <person name="Smith D."/>
            <person name="Slezak T."/>
            <person name="Solovyev V."/>
            <person name="Thayer N."/>
            <person name="Tice H."/>
            <person name="Tsai M."/>
            <person name="Ustaszewska A."/>
            <person name="Vo N."/>
            <person name="Wagner M."/>
            <person name="Wheeler J."/>
            <person name="Wu K."/>
            <person name="Xie G."/>
            <person name="Yang J."/>
            <person name="Dubchak I."/>
            <person name="Furey T.S."/>
            <person name="DeJong P."/>
            <person name="Dickson M."/>
            <person name="Gordon D."/>
            <person name="Eichler E.E."/>
            <person name="Pennacchio L.A."/>
            <person name="Richardson P."/>
            <person name="Stubbs L."/>
            <person name="Rokhsar D.S."/>
            <person name="Myers R.M."/>
            <person name="Rubin E.M."/>
            <person name="Lucas S.M."/>
        </authorList>
    </citation>
    <scope>NUCLEOTIDE SEQUENCE [LARGE SCALE GENOMIC DNA]</scope>
</reference>
<reference key="6">
    <citation type="submission" date="2005-07" db="EMBL/GenBank/DDBJ databases">
        <authorList>
            <person name="Mural R.J."/>
            <person name="Istrail S."/>
            <person name="Sutton G.G."/>
            <person name="Florea L."/>
            <person name="Halpern A.L."/>
            <person name="Mobarry C.M."/>
            <person name="Lippert R."/>
            <person name="Walenz B."/>
            <person name="Shatkay H."/>
            <person name="Dew I."/>
            <person name="Miller J.R."/>
            <person name="Flanigan M.J."/>
            <person name="Edwards N.J."/>
            <person name="Bolanos R."/>
            <person name="Fasulo D."/>
            <person name="Halldorsson B.V."/>
            <person name="Hannenhalli S."/>
            <person name="Turner R."/>
            <person name="Yooseph S."/>
            <person name="Lu F."/>
            <person name="Nusskern D.R."/>
            <person name="Shue B.C."/>
            <person name="Zheng X.H."/>
            <person name="Zhong F."/>
            <person name="Delcher A.L."/>
            <person name="Huson D.H."/>
            <person name="Kravitz S.A."/>
            <person name="Mouchard L."/>
            <person name="Reinert K."/>
            <person name="Remington K.A."/>
            <person name="Clark A.G."/>
            <person name="Waterman M.S."/>
            <person name="Eichler E.E."/>
            <person name="Adams M.D."/>
            <person name="Hunkapiller M.W."/>
            <person name="Myers E.W."/>
            <person name="Venter J.C."/>
        </authorList>
    </citation>
    <scope>NUCLEOTIDE SEQUENCE [LARGE SCALE GENOMIC DNA]</scope>
    <scope>VARIANT SER-188</scope>
</reference>
<reference key="7">
    <citation type="journal article" date="2004" name="Genome Res.">
        <title>The status, quality, and expansion of the NIH full-length cDNA project: the Mammalian Gene Collection (MGC).</title>
        <authorList>
            <consortium name="The MGC Project Team"/>
        </authorList>
    </citation>
    <scope>NUCLEOTIDE SEQUENCE [LARGE SCALE MRNA] (ISOFORM 1)</scope>
    <scope>VARIANT SER-188</scope>
    <source>
        <tissue>Lymph</tissue>
    </source>
</reference>
<reference key="8">
    <citation type="journal article" date="2004" name="Nat. Genet.">
        <title>Complete sequencing and characterization of 21,243 full-length human cDNAs.</title>
        <authorList>
            <person name="Ota T."/>
            <person name="Suzuki Y."/>
            <person name="Nishikawa T."/>
            <person name="Otsuki T."/>
            <person name="Sugiyama T."/>
            <person name="Irie R."/>
            <person name="Wakamatsu A."/>
            <person name="Hayashi K."/>
            <person name="Sato H."/>
            <person name="Nagai K."/>
            <person name="Kimura K."/>
            <person name="Makita H."/>
            <person name="Sekine M."/>
            <person name="Obayashi M."/>
            <person name="Nishi T."/>
            <person name="Shibahara T."/>
            <person name="Tanaka T."/>
            <person name="Ishii S."/>
            <person name="Yamamoto J."/>
            <person name="Saito K."/>
            <person name="Kawai Y."/>
            <person name="Isono Y."/>
            <person name="Nakamura Y."/>
            <person name="Nagahari K."/>
            <person name="Murakami K."/>
            <person name="Yasuda T."/>
            <person name="Iwayanagi T."/>
            <person name="Wagatsuma M."/>
            <person name="Shiratori A."/>
            <person name="Sudo H."/>
            <person name="Hosoiri T."/>
            <person name="Kaku Y."/>
            <person name="Kodaira H."/>
            <person name="Kondo H."/>
            <person name="Sugawara M."/>
            <person name="Takahashi M."/>
            <person name="Kanda K."/>
            <person name="Yokoi T."/>
            <person name="Furuya T."/>
            <person name="Kikkawa E."/>
            <person name="Omura Y."/>
            <person name="Abe K."/>
            <person name="Kamihara K."/>
            <person name="Katsuta N."/>
            <person name="Sato K."/>
            <person name="Tanikawa M."/>
            <person name="Yamazaki M."/>
            <person name="Ninomiya K."/>
            <person name="Ishibashi T."/>
            <person name="Yamashita H."/>
            <person name="Murakawa K."/>
            <person name="Fujimori K."/>
            <person name="Tanai H."/>
            <person name="Kimata M."/>
            <person name="Watanabe M."/>
            <person name="Hiraoka S."/>
            <person name="Chiba Y."/>
            <person name="Ishida S."/>
            <person name="Ono Y."/>
            <person name="Takiguchi S."/>
            <person name="Watanabe S."/>
            <person name="Yosida M."/>
            <person name="Hotuta T."/>
            <person name="Kusano J."/>
            <person name="Kanehori K."/>
            <person name="Takahashi-Fujii A."/>
            <person name="Hara H."/>
            <person name="Tanase T.-O."/>
            <person name="Nomura Y."/>
            <person name="Togiya S."/>
            <person name="Komai F."/>
            <person name="Hara R."/>
            <person name="Takeuchi K."/>
            <person name="Arita M."/>
            <person name="Imose N."/>
            <person name="Musashino K."/>
            <person name="Yuuki H."/>
            <person name="Oshima A."/>
            <person name="Sasaki N."/>
            <person name="Aotsuka S."/>
            <person name="Yoshikawa Y."/>
            <person name="Matsunawa H."/>
            <person name="Ichihara T."/>
            <person name="Shiohata N."/>
            <person name="Sano S."/>
            <person name="Moriya S."/>
            <person name="Momiyama H."/>
            <person name="Satoh N."/>
            <person name="Takami S."/>
            <person name="Terashima Y."/>
            <person name="Suzuki O."/>
            <person name="Nakagawa S."/>
            <person name="Senoh A."/>
            <person name="Mizoguchi H."/>
            <person name="Goto Y."/>
            <person name="Shimizu F."/>
            <person name="Wakebe H."/>
            <person name="Hishigaki H."/>
            <person name="Watanabe T."/>
            <person name="Sugiyama A."/>
            <person name="Takemoto M."/>
            <person name="Kawakami B."/>
            <person name="Yamazaki M."/>
            <person name="Watanabe K."/>
            <person name="Kumagai A."/>
            <person name="Itakura S."/>
            <person name="Fukuzumi Y."/>
            <person name="Fujimori Y."/>
            <person name="Komiyama M."/>
            <person name="Tashiro H."/>
            <person name="Tanigami A."/>
            <person name="Fujiwara T."/>
            <person name="Ono T."/>
            <person name="Yamada K."/>
            <person name="Fujii Y."/>
            <person name="Ozaki K."/>
            <person name="Hirao M."/>
            <person name="Ohmori Y."/>
            <person name="Kawabata A."/>
            <person name="Hikiji T."/>
            <person name="Kobatake N."/>
            <person name="Inagaki H."/>
            <person name="Ikema Y."/>
            <person name="Okamoto S."/>
            <person name="Okitani R."/>
            <person name="Kawakami T."/>
            <person name="Noguchi S."/>
            <person name="Itoh T."/>
            <person name="Shigeta K."/>
            <person name="Senba T."/>
            <person name="Matsumura K."/>
            <person name="Nakajima Y."/>
            <person name="Mizuno T."/>
            <person name="Morinaga M."/>
            <person name="Sasaki M."/>
            <person name="Togashi T."/>
            <person name="Oyama M."/>
            <person name="Hata H."/>
            <person name="Watanabe M."/>
            <person name="Komatsu T."/>
            <person name="Mizushima-Sugano J."/>
            <person name="Satoh T."/>
            <person name="Shirai Y."/>
            <person name="Takahashi Y."/>
            <person name="Nakagawa K."/>
            <person name="Okumura K."/>
            <person name="Nagase T."/>
            <person name="Nomura N."/>
            <person name="Kikuchi H."/>
            <person name="Masuho Y."/>
            <person name="Yamashita R."/>
            <person name="Nakai K."/>
            <person name="Yada T."/>
            <person name="Nakamura Y."/>
            <person name="Ohara O."/>
            <person name="Isogai T."/>
            <person name="Sugano S."/>
        </authorList>
    </citation>
    <scope>NUCLEOTIDE SEQUENCE [LARGE SCALE MRNA] OF 365-1033 (ISOFORM 2)</scope>
    <source>
        <tissue>Glial tumor</tissue>
    </source>
</reference>
<organism>
    <name type="scientific">Homo sapiens</name>
    <name type="common">Human</name>
    <dbReference type="NCBI Taxonomy" id="9606"/>
    <lineage>
        <taxon>Eukaryota</taxon>
        <taxon>Metazoa</taxon>
        <taxon>Chordata</taxon>
        <taxon>Craniata</taxon>
        <taxon>Vertebrata</taxon>
        <taxon>Euteleostomi</taxon>
        <taxon>Mammalia</taxon>
        <taxon>Eutheria</taxon>
        <taxon>Euarchontoglires</taxon>
        <taxon>Primates</taxon>
        <taxon>Haplorrhini</taxon>
        <taxon>Catarrhini</taxon>
        <taxon>Hominidae</taxon>
        <taxon>Homo</taxon>
    </lineage>
</organism>
<evidence type="ECO:0000255" key="1">
    <source>
        <dbReference type="PROSITE-ProRule" id="PRU00061"/>
    </source>
</evidence>
<evidence type="ECO:0000255" key="2">
    <source>
        <dbReference type="PROSITE-ProRule" id="PRU00136"/>
    </source>
</evidence>
<evidence type="ECO:0000269" key="3">
    <source>
    </source>
</evidence>
<evidence type="ECO:0000269" key="4">
    <source>
    </source>
</evidence>
<evidence type="ECO:0000269" key="5">
    <source>
    </source>
</evidence>
<evidence type="ECO:0000269" key="6">
    <source>
    </source>
</evidence>
<evidence type="ECO:0000269" key="7">
    <source ref="4"/>
</evidence>
<evidence type="ECO:0000269" key="8">
    <source ref="6"/>
</evidence>
<evidence type="ECO:0000303" key="9">
    <source>
    </source>
</evidence>
<evidence type="ECO:0000303" key="10">
    <source ref="4"/>
</evidence>
<evidence type="ECO:0000305" key="11"/>
<proteinExistence type="evidence at protein level"/>
<keyword id="KW-0025">Alternative splicing</keyword>
<keyword id="KW-0067">ATP-binding</keyword>
<keyword id="KW-0433">Leucine-rich repeat</keyword>
<keyword id="KW-0547">Nucleotide-binding</keyword>
<keyword id="KW-1267">Proteomics identification</keyword>
<keyword id="KW-1185">Reference proteome</keyword>
<keyword id="KW-0677">Repeat</keyword>
<sequence>MAESDSTDFDLLWYLENLSDKEFQSFKKYLARKILDFKLPQFPLIQMTKEELANVLPISYEGQYIWNMLFSIFSMMRKEDLCRKIIGRRNRNQEACKAVMRRKFMLQWESHTFGKFHYKFFRDVSSDVFYILQLAYDSTSYYSANNLNVFLMGERASGKTIVINLAVLRWIKGEMWQNMISYVVHLTAHEINQMTNSSLAELIAKDWPDGQAPIADILSDPKKLLFILEDLDNIRFELNVNESALCSNSTQKVPIPVLLVSLLKRKMAPGCWFLISSRPTRGNNVKTFLKEVDCCTTLQLSNGKREIYFNSFFKDRQRASAALQLVHEDEILVGLCRVAILCWITCTVLKRQMDKGRDFQLCCQTPTDLHAHFLADALTSEAGLTANQYHLGLLKRLCLLAAGGLFLSTLNFSGEDLRCVGFTEADVSVLQAANILLPSNTHKDRYKFIHLNVQEFCTAIAFLMAVPNYLIPSGSREYKEKREQYSDFNQVFTFIFGLLNANRRKILETSFGYQLPMVDSFKWYSVGYMKHLDRDPEKLTHHMPLFYCLYENREEEFVKTIVDALMEVTVYLQSDKDMMVSLYCLDYCCHLRTLKLSVQRIFQNKEPLIRPTASQMKSLVYWREICSLFYTMESLRELHIFDNDLNGISERILSKALEHSSCKLRTLKLSYVSTASGFEDLLKALARNRSLTYLSINCTSISLNMFSLLHDILHEPTCQISHLSLMKCDLRASECEEIASLLISGGSLRKLTLSSNPLRSDGMNILCDALLHPNCTLISLVLVFCCLTENCCSALGRVLLFSPTLRQLDLCVNRLKNYGVLHVTFPLLFPTCQLEELHLSGCFFSSDICQYIAIVIATNEKLRSLEIGSNKIEDAGMQLLCGGLRHPNCMLVNIGLEECMLTSACCRSLASVLTTNKTLERLNLLQNHLGNDGVAKLLESLISPDCVLKVVGLPLTGLNTQTQQLLMTVKERKPSLIFLSETWSLKEGREIGVTPASQPGSIIPNSNLDYMFFKFPRMSAAMRTSNTASRQPL</sequence>
<gene>
    <name type="primary">NLRP11</name>
    <name type="synonym">NALP11</name>
    <name type="synonym">NOD17</name>
    <name type="synonym">PAN10</name>
    <name type="synonym">PYPAF6</name>
</gene>
<accession>P59045</accession>
<accession>C9JSF5</accession>
<accession>Q2TV85</accession>
<accession>Q2TV86</accession>
<accession>Q53ZZ0</accession>
<accession>Q8NBF5</accession>
<dbReference type="EMBL" id="AY095145">
    <property type="protein sequence ID" value="AAM14632.1"/>
    <property type="molecule type" value="mRNA"/>
</dbReference>
<dbReference type="EMBL" id="AY226382">
    <property type="protein sequence ID" value="AAO59428.1"/>
    <property type="molecule type" value="mRNA"/>
</dbReference>
<dbReference type="EMBL" id="AY154466">
    <property type="protein sequence ID" value="AAO18162.1"/>
    <property type="molecule type" value="mRNA"/>
</dbReference>
<dbReference type="EMBL" id="AY168967">
    <property type="protein sequence ID" value="AAO12532.1"/>
    <property type="molecule type" value="mRNA"/>
</dbReference>
<dbReference type="EMBL" id="AY168968">
    <property type="protein sequence ID" value="AAO12533.1"/>
    <property type="molecule type" value="mRNA"/>
</dbReference>
<dbReference type="EMBL" id="AC008749">
    <property type="status" value="NOT_ANNOTATED_CDS"/>
    <property type="molecule type" value="Genomic_DNA"/>
</dbReference>
<dbReference type="EMBL" id="AC012310">
    <property type="status" value="NOT_ANNOTATED_CDS"/>
    <property type="molecule type" value="Genomic_DNA"/>
</dbReference>
<dbReference type="EMBL" id="CH471135">
    <property type="protein sequence ID" value="EAW72415.1"/>
    <property type="molecule type" value="Genomic_DNA"/>
</dbReference>
<dbReference type="EMBL" id="BC034730">
    <property type="protein sequence ID" value="AAH34730.1"/>
    <property type="molecule type" value="mRNA"/>
</dbReference>
<dbReference type="EMBL" id="AK090621">
    <property type="protein sequence ID" value="BAC03490.1"/>
    <property type="status" value="ALT_INIT"/>
    <property type="molecule type" value="mRNA"/>
</dbReference>
<dbReference type="CCDS" id="CCDS12935.1">
    <molecule id="P59045-1"/>
</dbReference>
<dbReference type="CCDS" id="CCDS74458.1">
    <molecule id="P59045-3"/>
</dbReference>
<dbReference type="CCDS" id="CCDS92693.1">
    <molecule id="P59045-2"/>
</dbReference>
<dbReference type="RefSeq" id="NP_001284672.1">
    <molecule id="P59045-3"/>
    <property type="nucleotide sequence ID" value="NM_001297743.3"/>
</dbReference>
<dbReference type="RefSeq" id="NP_001372380.1">
    <molecule id="P59045-2"/>
    <property type="nucleotide sequence ID" value="NM_001385451.2"/>
</dbReference>
<dbReference type="RefSeq" id="NP_001381823.1">
    <molecule id="P59045-1"/>
    <property type="nucleotide sequence ID" value="NM_001394894.2"/>
</dbReference>
<dbReference type="RefSeq" id="NP_659444.2">
    <molecule id="P59045-1"/>
    <property type="nucleotide sequence ID" value="NM_145007.5"/>
</dbReference>
<dbReference type="SMR" id="P59045"/>
<dbReference type="BioGRID" id="128489">
    <property type="interactions" value="4"/>
</dbReference>
<dbReference type="FunCoup" id="P59045">
    <property type="interactions" value="72"/>
</dbReference>
<dbReference type="IntAct" id="P59045">
    <property type="interactions" value="2"/>
</dbReference>
<dbReference type="STRING" id="9606.ENSP00000466285"/>
<dbReference type="GlyGen" id="P59045">
    <property type="glycosylation" value="3 sites, 1 O-linked glycan (2 sites)"/>
</dbReference>
<dbReference type="iPTMnet" id="P59045"/>
<dbReference type="PhosphoSitePlus" id="P59045"/>
<dbReference type="SwissPalm" id="P59045"/>
<dbReference type="BioMuta" id="NLRP11"/>
<dbReference type="DMDM" id="288558818"/>
<dbReference type="MassIVE" id="P59045"/>
<dbReference type="PaxDb" id="9606-ENSP00000466285"/>
<dbReference type="PeptideAtlas" id="P59045"/>
<dbReference type="ProteomicsDB" id="57114">
    <molecule id="P59045-1"/>
</dbReference>
<dbReference type="ProteomicsDB" id="57115">
    <molecule id="P59045-2"/>
</dbReference>
<dbReference type="ProteomicsDB" id="57116">
    <molecule id="P59045-3"/>
</dbReference>
<dbReference type="Antibodypedia" id="33155">
    <property type="antibodies" value="103 antibodies from 25 providers"/>
</dbReference>
<dbReference type="DNASU" id="204801"/>
<dbReference type="Ensembl" id="ENST00000589093.6">
    <molecule id="P59045-1"/>
    <property type="protein sequence ID" value="ENSP00000466285.1"/>
    <property type="gene ID" value="ENSG00000179873.14"/>
</dbReference>
<dbReference type="Ensembl" id="ENST00000589824.6">
    <molecule id="P59045-2"/>
    <property type="protein sequence ID" value="ENSP00000468082.1"/>
    <property type="gene ID" value="ENSG00000179873.14"/>
</dbReference>
<dbReference type="Ensembl" id="ENST00000592953.5">
    <molecule id="P59045-3"/>
    <property type="protein sequence ID" value="ENSP00000468196.1"/>
    <property type="gene ID" value="ENSG00000179873.14"/>
</dbReference>
<dbReference type="GeneID" id="204801"/>
<dbReference type="KEGG" id="hsa:204801"/>
<dbReference type="MANE-Select" id="ENST00000589093.6">
    <property type="protein sequence ID" value="ENSP00000466285.1"/>
    <property type="RefSeq nucleotide sequence ID" value="NM_001394894.2"/>
    <property type="RefSeq protein sequence ID" value="NP_001381823.1"/>
</dbReference>
<dbReference type="UCSC" id="uc002qlz.4">
    <molecule id="P59045-1"/>
    <property type="organism name" value="human"/>
</dbReference>
<dbReference type="AGR" id="HGNC:22945"/>
<dbReference type="CTD" id="204801"/>
<dbReference type="DisGeNET" id="204801"/>
<dbReference type="GeneCards" id="NLRP11"/>
<dbReference type="HGNC" id="HGNC:22945">
    <property type="gene designation" value="NLRP11"/>
</dbReference>
<dbReference type="HPA" id="ENSG00000179873">
    <property type="expression patterns" value="Tissue enhanced (epididymis, liver)"/>
</dbReference>
<dbReference type="MIM" id="609664">
    <property type="type" value="gene"/>
</dbReference>
<dbReference type="neXtProt" id="NX_P59045"/>
<dbReference type="OpenTargets" id="ENSG00000179873"/>
<dbReference type="PharmGKB" id="PA162397841"/>
<dbReference type="VEuPathDB" id="HostDB:ENSG00000179873"/>
<dbReference type="eggNOG" id="ENOG502QQ5H">
    <property type="taxonomic scope" value="Eukaryota"/>
</dbReference>
<dbReference type="GeneTree" id="ENSGT00940000163635"/>
<dbReference type="HOGENOM" id="CLU_002274_2_1_1"/>
<dbReference type="InParanoid" id="P59045"/>
<dbReference type="OMA" id="MDTLWEL"/>
<dbReference type="OrthoDB" id="120976at2759"/>
<dbReference type="PAN-GO" id="P59045">
    <property type="GO annotations" value="2 GO annotations based on evolutionary models"/>
</dbReference>
<dbReference type="PhylomeDB" id="P59045"/>
<dbReference type="PathwayCommons" id="P59045"/>
<dbReference type="SignaLink" id="P59045"/>
<dbReference type="BioGRID-ORCS" id="204801">
    <property type="hits" value="12 hits in 1138 CRISPR screens"/>
</dbReference>
<dbReference type="ChiTaRS" id="NLRP11">
    <property type="organism name" value="human"/>
</dbReference>
<dbReference type="GeneWiki" id="NLRP11"/>
<dbReference type="GenomeRNAi" id="204801"/>
<dbReference type="Pharos" id="P59045">
    <property type="development level" value="Tbio"/>
</dbReference>
<dbReference type="PRO" id="PR:P59045"/>
<dbReference type="Proteomes" id="UP000005640">
    <property type="component" value="Chromosome 19"/>
</dbReference>
<dbReference type="RNAct" id="P59045">
    <property type="molecule type" value="protein"/>
</dbReference>
<dbReference type="Bgee" id="ENSG00000179873">
    <property type="expression patterns" value="Expressed in secondary oocyte and 20 other cell types or tissues"/>
</dbReference>
<dbReference type="ExpressionAtlas" id="P59045">
    <property type="expression patterns" value="baseline and differential"/>
</dbReference>
<dbReference type="GO" id="GO:0005737">
    <property type="term" value="C:cytoplasm"/>
    <property type="evidence" value="ECO:0000318"/>
    <property type="project" value="GO_Central"/>
</dbReference>
<dbReference type="GO" id="GO:0005524">
    <property type="term" value="F:ATP binding"/>
    <property type="evidence" value="ECO:0007669"/>
    <property type="project" value="UniProtKB-KW"/>
</dbReference>
<dbReference type="GO" id="GO:0016715">
    <property type="term" value="F:oxidoreductase activity, acting on paired donors, with incorporation or reduction of molecular oxygen, reduced ascorbate as one donor, and incorporation of one atom of oxygen"/>
    <property type="evidence" value="ECO:0007669"/>
    <property type="project" value="InterPro"/>
</dbReference>
<dbReference type="GO" id="GO:0003723">
    <property type="term" value="F:RNA binding"/>
    <property type="evidence" value="ECO:0007005"/>
    <property type="project" value="UniProtKB"/>
</dbReference>
<dbReference type="GO" id="GO:0050727">
    <property type="term" value="P:regulation of inflammatory response"/>
    <property type="evidence" value="ECO:0000318"/>
    <property type="project" value="GO_Central"/>
</dbReference>
<dbReference type="CDD" id="cd08320">
    <property type="entry name" value="Pyrin_NALPs"/>
    <property type="match status" value="1"/>
</dbReference>
<dbReference type="FunFam" id="3.80.10.10:FF:000465">
    <property type="entry name" value="NACHT, LRR and PYD domains-containing protein 11"/>
    <property type="match status" value="1"/>
</dbReference>
<dbReference type="FunFam" id="3.80.10.10:FF:000887">
    <property type="entry name" value="NLR family pyrin domain containing 11"/>
    <property type="match status" value="1"/>
</dbReference>
<dbReference type="Gene3D" id="1.10.533.10">
    <property type="entry name" value="Death Domain, Fas"/>
    <property type="match status" value="1"/>
</dbReference>
<dbReference type="Gene3D" id="3.40.50.300">
    <property type="entry name" value="P-loop containing nucleotide triphosphate hydrolases"/>
    <property type="match status" value="1"/>
</dbReference>
<dbReference type="Gene3D" id="3.80.10.10">
    <property type="entry name" value="Ribonuclease Inhibitor"/>
    <property type="match status" value="3"/>
</dbReference>
<dbReference type="InterPro" id="IPR020611">
    <property type="entry name" value="Cu2_ascorb_mOase_CS-1"/>
</dbReference>
<dbReference type="InterPro" id="IPR004020">
    <property type="entry name" value="DAPIN"/>
</dbReference>
<dbReference type="InterPro" id="IPR011029">
    <property type="entry name" value="DEATH-like_dom_sf"/>
</dbReference>
<dbReference type="InterPro" id="IPR001611">
    <property type="entry name" value="Leu-rich_rpt"/>
</dbReference>
<dbReference type="InterPro" id="IPR032675">
    <property type="entry name" value="LRR_dom_sf"/>
</dbReference>
<dbReference type="InterPro" id="IPR007111">
    <property type="entry name" value="NACHT_NTPase"/>
</dbReference>
<dbReference type="InterPro" id="IPR041267">
    <property type="entry name" value="NLRP_HD2"/>
</dbReference>
<dbReference type="InterPro" id="IPR050637">
    <property type="entry name" value="NLRP_innate_immun_reg"/>
</dbReference>
<dbReference type="InterPro" id="IPR041075">
    <property type="entry name" value="NOD1/2_WH"/>
</dbReference>
<dbReference type="InterPro" id="IPR027417">
    <property type="entry name" value="P-loop_NTPase"/>
</dbReference>
<dbReference type="PANTHER" id="PTHR45690:SF5">
    <property type="entry name" value="NACHT, LRR AND PYD DOMAINS-CONTAINING PROTEIN 11"/>
    <property type="match status" value="1"/>
</dbReference>
<dbReference type="PANTHER" id="PTHR45690">
    <property type="entry name" value="NACHT, LRR AND PYD DOMAINS-CONTAINING PROTEIN 12"/>
    <property type="match status" value="1"/>
</dbReference>
<dbReference type="Pfam" id="PF13516">
    <property type="entry name" value="LRR_6"/>
    <property type="match status" value="2"/>
</dbReference>
<dbReference type="Pfam" id="PF05729">
    <property type="entry name" value="NACHT"/>
    <property type="match status" value="1"/>
</dbReference>
<dbReference type="Pfam" id="PF17776">
    <property type="entry name" value="NLRC4_HD2"/>
    <property type="match status" value="1"/>
</dbReference>
<dbReference type="Pfam" id="PF17779">
    <property type="entry name" value="NOD2_WH"/>
    <property type="match status" value="1"/>
</dbReference>
<dbReference type="Pfam" id="PF02758">
    <property type="entry name" value="PYRIN"/>
    <property type="match status" value="1"/>
</dbReference>
<dbReference type="SMART" id="SM00368">
    <property type="entry name" value="LRR_RI"/>
    <property type="match status" value="8"/>
</dbReference>
<dbReference type="SMART" id="SM01289">
    <property type="entry name" value="PYRIN"/>
    <property type="match status" value="1"/>
</dbReference>
<dbReference type="SUPFAM" id="SSF47986">
    <property type="entry name" value="DEATH domain"/>
    <property type="match status" value="1"/>
</dbReference>
<dbReference type="SUPFAM" id="SSF52047">
    <property type="entry name" value="RNI-like"/>
    <property type="match status" value="1"/>
</dbReference>
<dbReference type="PROSITE" id="PS50824">
    <property type="entry name" value="DAPIN"/>
    <property type="match status" value="1"/>
</dbReference>
<dbReference type="PROSITE" id="PS50837">
    <property type="entry name" value="NACHT"/>
    <property type="match status" value="1"/>
</dbReference>
<name>NAL11_HUMAN</name>